<reference key="1">
    <citation type="journal article" date="2011" name="J. Bacteriol.">
        <title>Comparative genomics of 28 Salmonella enterica isolates: evidence for CRISPR-mediated adaptive sublineage evolution.</title>
        <authorList>
            <person name="Fricke W.F."/>
            <person name="Mammel M.K."/>
            <person name="McDermott P.F."/>
            <person name="Tartera C."/>
            <person name="White D.G."/>
            <person name="Leclerc J.E."/>
            <person name="Ravel J."/>
            <person name="Cebula T.A."/>
        </authorList>
    </citation>
    <scope>NUCLEOTIDE SEQUENCE [LARGE SCALE GENOMIC DNA]</scope>
    <source>
        <strain>CT_02021853</strain>
    </source>
</reference>
<accession>B5FJ53</accession>
<comment type="subcellular location">
    <subcellularLocation>
        <location evidence="1">Cytoplasm</location>
    </subcellularLocation>
</comment>
<comment type="similarity">
    <text evidence="1">Belongs to the UPF0294 family.</text>
</comment>
<sequence>MRKNTYAMRYVAGQPAERILPPRSFASIGQALPAGEPLSSEERIRILVWNIFKQQRAEWLSVLKNYGKDAHLVLLQEAQTTPELVQFATANYLAADQVPAFVLPQHPSGVMTLSAAHPVYCCPLREREPILRLAKSALVTVYPLPDTRLLMVVNVHAVNFSLGVDVYSKQLLPIGDQIAHHSGPVIMAGDFNAWSRPRMNALYRFAREMSLRQVRFTDDQRRRAFGRPLDFVFYRGLNVNEASVLVTRASDHNPLLVEFSPGKPEQ</sequence>
<dbReference type="EMBL" id="CP001144">
    <property type="protein sequence ID" value="ACH76059.1"/>
    <property type="molecule type" value="Genomic_DNA"/>
</dbReference>
<dbReference type="RefSeq" id="WP_001230986.1">
    <property type="nucleotide sequence ID" value="NC_011205.1"/>
</dbReference>
<dbReference type="SMR" id="B5FJ53"/>
<dbReference type="KEGG" id="sed:SeD_A0281"/>
<dbReference type="HOGENOM" id="CLU_083563_0_0_6"/>
<dbReference type="Proteomes" id="UP000008322">
    <property type="component" value="Chromosome"/>
</dbReference>
<dbReference type="GO" id="GO:0005737">
    <property type="term" value="C:cytoplasm"/>
    <property type="evidence" value="ECO:0007669"/>
    <property type="project" value="UniProtKB-SubCell"/>
</dbReference>
<dbReference type="GO" id="GO:0003824">
    <property type="term" value="F:catalytic activity"/>
    <property type="evidence" value="ECO:0007669"/>
    <property type="project" value="InterPro"/>
</dbReference>
<dbReference type="Gene3D" id="3.60.10.10">
    <property type="entry name" value="Endonuclease/exonuclease/phosphatase"/>
    <property type="match status" value="1"/>
</dbReference>
<dbReference type="HAMAP" id="MF_01119">
    <property type="entry name" value="UPF0294"/>
    <property type="match status" value="1"/>
</dbReference>
<dbReference type="InterPro" id="IPR036691">
    <property type="entry name" value="Endo/exonu/phosph_ase_sf"/>
</dbReference>
<dbReference type="InterPro" id="IPR005135">
    <property type="entry name" value="Endo/exonuclease/phosphatase"/>
</dbReference>
<dbReference type="InterPro" id="IPR022958">
    <property type="entry name" value="UPF0294"/>
</dbReference>
<dbReference type="NCBIfam" id="NF003839">
    <property type="entry name" value="PRK05421.1-1"/>
    <property type="match status" value="1"/>
</dbReference>
<dbReference type="NCBIfam" id="NF003840">
    <property type="entry name" value="PRK05421.1-2"/>
    <property type="match status" value="1"/>
</dbReference>
<dbReference type="NCBIfam" id="NF003841">
    <property type="entry name" value="PRK05421.1-3"/>
    <property type="match status" value="1"/>
</dbReference>
<dbReference type="NCBIfam" id="NF003842">
    <property type="entry name" value="PRK05421.1-4"/>
    <property type="match status" value="1"/>
</dbReference>
<dbReference type="Pfam" id="PF03372">
    <property type="entry name" value="Exo_endo_phos"/>
    <property type="match status" value="1"/>
</dbReference>
<dbReference type="SUPFAM" id="SSF56219">
    <property type="entry name" value="DNase I-like"/>
    <property type="match status" value="1"/>
</dbReference>
<keyword id="KW-0963">Cytoplasm</keyword>
<name>YAFD_SALDC</name>
<gene>
    <name evidence="1" type="primary">yafD</name>
    <name type="ordered locus">SeD_A0281</name>
</gene>
<proteinExistence type="inferred from homology"/>
<evidence type="ECO:0000255" key="1">
    <source>
        <dbReference type="HAMAP-Rule" id="MF_01119"/>
    </source>
</evidence>
<organism>
    <name type="scientific">Salmonella dublin (strain CT_02021853)</name>
    <dbReference type="NCBI Taxonomy" id="439851"/>
    <lineage>
        <taxon>Bacteria</taxon>
        <taxon>Pseudomonadati</taxon>
        <taxon>Pseudomonadota</taxon>
        <taxon>Gammaproteobacteria</taxon>
        <taxon>Enterobacterales</taxon>
        <taxon>Enterobacteriaceae</taxon>
        <taxon>Salmonella</taxon>
    </lineage>
</organism>
<protein>
    <recommendedName>
        <fullName evidence="1">UPF0294 protein YafD</fullName>
    </recommendedName>
</protein>
<feature type="chain" id="PRO_1000137248" description="UPF0294 protein YafD">
    <location>
        <begin position="1"/>
        <end position="266"/>
    </location>
</feature>